<evidence type="ECO:0000250" key="1">
    <source>
        <dbReference type="UniProtKB" id="B9F4I8"/>
    </source>
</evidence>
<evidence type="ECO:0000256" key="2">
    <source>
        <dbReference type="SAM" id="MobiDB-lite"/>
    </source>
</evidence>
<evidence type="ECO:0000305" key="3"/>
<evidence type="ECO:0000312" key="4">
    <source>
        <dbReference type="EMBL" id="BAD46616.1"/>
    </source>
</evidence>
<evidence type="ECO:0000312" key="5">
    <source>
        <dbReference type="EMBL" id="BAF25910.1"/>
    </source>
</evidence>
<evidence type="ECO:0000312" key="6">
    <source>
        <dbReference type="EMBL" id="EEE70279.1"/>
    </source>
</evidence>
<comment type="function">
    <text evidence="1">Required for the accumulation of phytic acid in seeds. Phytic acid is the primary storage form of phosphorus in cereal grains and other plant seeds.</text>
</comment>
<dbReference type="EMBL" id="AP006162">
    <property type="protein sequence ID" value="BAD46616.1"/>
    <property type="molecule type" value="Genomic_DNA"/>
</dbReference>
<dbReference type="EMBL" id="AP008215">
    <property type="protein sequence ID" value="BAF25910.1"/>
    <property type="molecule type" value="Genomic_DNA"/>
</dbReference>
<dbReference type="EMBL" id="AP014965">
    <property type="protein sequence ID" value="BAT09534.1"/>
    <property type="molecule type" value="Genomic_DNA"/>
</dbReference>
<dbReference type="EMBL" id="CM000146">
    <property type="protein sequence ID" value="EEE70279.1"/>
    <property type="molecule type" value="Genomic_DNA"/>
</dbReference>
<dbReference type="RefSeq" id="XP_015612360.1">
    <property type="nucleotide sequence ID" value="XM_015756874.1"/>
</dbReference>
<dbReference type="STRING" id="39947.Q651A1"/>
<dbReference type="iPTMnet" id="Q651A1"/>
<dbReference type="PaxDb" id="39947-Q651A1"/>
<dbReference type="EnsemblPlants" id="Os09t0572200-01">
    <property type="protein sequence ID" value="Os09t0572200-01"/>
    <property type="gene ID" value="Os09g0572200"/>
</dbReference>
<dbReference type="Gramene" id="Os09t0572200-01">
    <property type="protein sequence ID" value="Os09t0572200-01"/>
    <property type="gene ID" value="Os09g0572200"/>
</dbReference>
<dbReference type="KEGG" id="dosa:Os09g0572200"/>
<dbReference type="eggNOG" id="ENOG502QR37">
    <property type="taxonomic scope" value="Eukaryota"/>
</dbReference>
<dbReference type="HOGENOM" id="CLU_014708_0_0_1"/>
<dbReference type="InParanoid" id="Q651A1"/>
<dbReference type="OMA" id="NGSSFRY"/>
<dbReference type="OrthoDB" id="10263927at2759"/>
<dbReference type="Proteomes" id="UP000000763">
    <property type="component" value="Chromosome 9"/>
</dbReference>
<dbReference type="Proteomes" id="UP000007752">
    <property type="component" value="Chromosome 9"/>
</dbReference>
<dbReference type="Proteomes" id="UP000059680">
    <property type="component" value="Chromosome 9"/>
</dbReference>
<dbReference type="ExpressionAtlas" id="Q651A1">
    <property type="expression patterns" value="baseline and differential"/>
</dbReference>
<dbReference type="Gene3D" id="3.40.50.300">
    <property type="entry name" value="P-loop containing nucleotide triphosphate hydrolases"/>
    <property type="match status" value="1"/>
</dbReference>
<dbReference type="InterPro" id="IPR027417">
    <property type="entry name" value="P-loop_NTPase"/>
</dbReference>
<dbReference type="PANTHER" id="PTHR33477:SF4">
    <property type="entry name" value="P-LOOP NTPASE DOMAIN-CONTAINING PROTEIN LPA1 HOMOLOG"/>
    <property type="match status" value="1"/>
</dbReference>
<dbReference type="PANTHER" id="PTHR33477">
    <property type="entry name" value="P-LOOP NTPASE DOMAIN-CONTAINING PROTEIN LPA1 HOMOLOG 1"/>
    <property type="match status" value="1"/>
</dbReference>
<dbReference type="SUPFAM" id="SSF52540">
    <property type="entry name" value="P-loop containing nucleoside triphosphate hydrolases"/>
    <property type="match status" value="1"/>
</dbReference>
<proteinExistence type="inferred from homology"/>
<reference key="1">
    <citation type="journal article" date="2005" name="Nature">
        <title>The map-based sequence of the rice genome.</title>
        <authorList>
            <consortium name="International rice genome sequencing project (IRGSP)"/>
        </authorList>
    </citation>
    <scope>NUCLEOTIDE SEQUENCE [LARGE SCALE GENOMIC DNA]</scope>
    <source>
        <strain>cv. Nipponbare</strain>
    </source>
</reference>
<reference key="2">
    <citation type="journal article" date="2008" name="Nucleic Acids Res.">
        <title>The rice annotation project database (RAP-DB): 2008 update.</title>
        <authorList>
            <consortium name="The rice annotation project (RAP)"/>
        </authorList>
    </citation>
    <scope>GENOME REANNOTATION</scope>
    <source>
        <strain>cv. Nipponbare</strain>
    </source>
</reference>
<reference key="3">
    <citation type="journal article" date="2013" name="Rice">
        <title>Improvement of the Oryza sativa Nipponbare reference genome using next generation sequence and optical map data.</title>
        <authorList>
            <person name="Kawahara Y."/>
            <person name="de la Bastide M."/>
            <person name="Hamilton J.P."/>
            <person name="Kanamori H."/>
            <person name="McCombie W.R."/>
            <person name="Ouyang S."/>
            <person name="Schwartz D.C."/>
            <person name="Tanaka T."/>
            <person name="Wu J."/>
            <person name="Zhou S."/>
            <person name="Childs K.L."/>
            <person name="Davidson R.M."/>
            <person name="Lin H."/>
            <person name="Quesada-Ocampo L."/>
            <person name="Vaillancourt B."/>
            <person name="Sakai H."/>
            <person name="Lee S.S."/>
            <person name="Kim J."/>
            <person name="Numa H."/>
            <person name="Itoh T."/>
            <person name="Buell C.R."/>
            <person name="Matsumoto T."/>
        </authorList>
    </citation>
    <scope>GENOME REANNOTATION</scope>
    <source>
        <strain>cv. Nipponbare</strain>
    </source>
</reference>
<reference key="4">
    <citation type="journal article" date="2005" name="PLoS Biol.">
        <title>The genomes of Oryza sativa: a history of duplications.</title>
        <authorList>
            <person name="Yu J."/>
            <person name="Wang J."/>
            <person name="Lin W."/>
            <person name="Li S."/>
            <person name="Li H."/>
            <person name="Zhou J."/>
            <person name="Ni P."/>
            <person name="Dong W."/>
            <person name="Hu S."/>
            <person name="Zeng C."/>
            <person name="Zhang J."/>
            <person name="Zhang Y."/>
            <person name="Li R."/>
            <person name="Xu Z."/>
            <person name="Li S."/>
            <person name="Li X."/>
            <person name="Zheng H."/>
            <person name="Cong L."/>
            <person name="Lin L."/>
            <person name="Yin J."/>
            <person name="Geng J."/>
            <person name="Li G."/>
            <person name="Shi J."/>
            <person name="Liu J."/>
            <person name="Lv H."/>
            <person name="Li J."/>
            <person name="Wang J."/>
            <person name="Deng Y."/>
            <person name="Ran L."/>
            <person name="Shi X."/>
            <person name="Wang X."/>
            <person name="Wu Q."/>
            <person name="Li C."/>
            <person name="Ren X."/>
            <person name="Wang J."/>
            <person name="Wang X."/>
            <person name="Li D."/>
            <person name="Liu D."/>
            <person name="Zhang X."/>
            <person name="Ji Z."/>
            <person name="Zhao W."/>
            <person name="Sun Y."/>
            <person name="Zhang Z."/>
            <person name="Bao J."/>
            <person name="Han Y."/>
            <person name="Dong L."/>
            <person name="Ji J."/>
            <person name="Chen P."/>
            <person name="Wu S."/>
            <person name="Liu J."/>
            <person name="Xiao Y."/>
            <person name="Bu D."/>
            <person name="Tan J."/>
            <person name="Yang L."/>
            <person name="Ye C."/>
            <person name="Zhang J."/>
            <person name="Xu J."/>
            <person name="Zhou Y."/>
            <person name="Yu Y."/>
            <person name="Zhang B."/>
            <person name="Zhuang S."/>
            <person name="Wei H."/>
            <person name="Liu B."/>
            <person name="Lei M."/>
            <person name="Yu H."/>
            <person name="Li Y."/>
            <person name="Xu H."/>
            <person name="Wei S."/>
            <person name="He X."/>
            <person name="Fang L."/>
            <person name="Zhang Z."/>
            <person name="Zhang Y."/>
            <person name="Huang X."/>
            <person name="Su Z."/>
            <person name="Tong W."/>
            <person name="Li J."/>
            <person name="Tong Z."/>
            <person name="Li S."/>
            <person name="Ye J."/>
            <person name="Wang L."/>
            <person name="Fang L."/>
            <person name="Lei T."/>
            <person name="Chen C.-S."/>
            <person name="Chen H.-C."/>
            <person name="Xu Z."/>
            <person name="Li H."/>
            <person name="Huang H."/>
            <person name="Zhang F."/>
            <person name="Xu H."/>
            <person name="Li N."/>
            <person name="Zhao C."/>
            <person name="Li S."/>
            <person name="Dong L."/>
            <person name="Huang Y."/>
            <person name="Li L."/>
            <person name="Xi Y."/>
            <person name="Qi Q."/>
            <person name="Li W."/>
            <person name="Zhang B."/>
            <person name="Hu W."/>
            <person name="Zhang Y."/>
            <person name="Tian X."/>
            <person name="Jiao Y."/>
            <person name="Liang X."/>
            <person name="Jin J."/>
            <person name="Gao L."/>
            <person name="Zheng W."/>
            <person name="Hao B."/>
            <person name="Liu S.-M."/>
            <person name="Wang W."/>
            <person name="Yuan L."/>
            <person name="Cao M."/>
            <person name="McDermott J."/>
            <person name="Samudrala R."/>
            <person name="Wang J."/>
            <person name="Wong G.K.-S."/>
            <person name="Yang H."/>
        </authorList>
    </citation>
    <scope>NUCLEOTIDE SEQUENCE [LARGE SCALE GENOMIC DNA]</scope>
    <source>
        <strain>cv. Nipponbare</strain>
    </source>
</reference>
<keyword id="KW-1185">Reference proteome</keyword>
<gene>
    <name evidence="5" type="ordered locus">Os09g0572200</name>
    <name evidence="3" type="ordered locus">LOC_Os09g39870</name>
    <name evidence="4" type="ORF">B1331F11.20</name>
    <name evidence="6" type="ORF">OsJ_30434</name>
</gene>
<name>LPA1H_ORYSJ</name>
<protein>
    <recommendedName>
        <fullName evidence="3">P-loop NTPase domain-containing protein LPA1 homolog</fullName>
    </recommendedName>
    <alternativeName>
        <fullName evidence="3">Protein LOW PHYTIC ACID 1 homolog</fullName>
    </alternativeName>
</protein>
<organism>
    <name type="scientific">Oryza sativa subsp. japonica</name>
    <name type="common">Rice</name>
    <dbReference type="NCBI Taxonomy" id="39947"/>
    <lineage>
        <taxon>Eukaryota</taxon>
        <taxon>Viridiplantae</taxon>
        <taxon>Streptophyta</taxon>
        <taxon>Embryophyta</taxon>
        <taxon>Tracheophyta</taxon>
        <taxon>Spermatophyta</taxon>
        <taxon>Magnoliopsida</taxon>
        <taxon>Liliopsida</taxon>
        <taxon>Poales</taxon>
        <taxon>Poaceae</taxon>
        <taxon>BOP clade</taxon>
        <taxon>Oryzoideae</taxon>
        <taxon>Oryzeae</taxon>
        <taxon>Oryzinae</taxon>
        <taxon>Oryza</taxon>
        <taxon>Oryza sativa</taxon>
    </lineage>
</organism>
<sequence length="713" mass="78384">MAAVQGQGQGKLLYIVVVDDDGATFRYTRSLLHSTLQLMGCKPRHAFEISGRVFDEIRGHMGGDMAMGGGGGVQRYELAADAEAASPRQFQFELYKRRTTLLIPRPLFLRLVCHALALYKYVAPDQRSDLHRACRIRERKESVTILLCGTSGCGKSTLSTLLGSRLGITTVVSTDSIRHMMRSFVEEKQNPLLWASTYHAGECLDPVAVADAKARRKAKKRSGISTTSTIDFDKTRPLNDKPDGKPIGKKQMAIEGYKAQSEMVIDSLDRLITAWEDRKESVVVEGVHLSLNFVMGLMRKHPSIIPFMIYISDEGKHTERFAVRAKYMTLDPTKNKYVKYISNIRTIQEYLCSRADKYLVPKVNNTNVDRSVASIHATVFSCLRRRAAGDQLYDPATNTVAVVNEEYKNQCVANSMSSKGMFKLIQRLGSSRKLMAIVNVDGSVSKAWPVESSSGDGKGGSENGSKKYVGDPIYGPLNIGRAESVNLQFGAFGISAWPTDAGCTSQAGSVNESWDNANEGTGSHVPSSSGSPKKLDGHCKEIKESAAASGSDDDEEEEEEAADVPPNSGSEEDLSEEDIRAIHEEMEGSVDEDCNRSDEEYDDLAMRDCMENGFLTDDGVVHTVFDGNGQKHSTLRKRQVNLRTLSKIDLDSPDTARSSSALPISASSKRNGTRRWKRSLSESFRSRPRSAPSLVELTPKHKGSAVPEVAPDK</sequence>
<accession>Q651A1</accession>
<accession>A0A0P0XQU4</accession>
<feature type="chain" id="PRO_0000431865" description="P-loop NTPase domain-containing protein LPA1 homolog">
    <location>
        <begin position="1"/>
        <end position="713"/>
    </location>
</feature>
<feature type="region of interest" description="Disordered" evidence="2">
    <location>
        <begin position="218"/>
        <end position="249"/>
    </location>
</feature>
<feature type="region of interest" description="Disordered" evidence="2">
    <location>
        <begin position="504"/>
        <end position="575"/>
    </location>
</feature>
<feature type="region of interest" description="Disordered" evidence="2">
    <location>
        <begin position="650"/>
        <end position="713"/>
    </location>
</feature>
<feature type="compositionally biased region" description="Basic and acidic residues" evidence="2">
    <location>
        <begin position="231"/>
        <end position="246"/>
    </location>
</feature>
<feature type="compositionally biased region" description="Polar residues" evidence="2">
    <location>
        <begin position="504"/>
        <end position="531"/>
    </location>
</feature>
<feature type="compositionally biased region" description="Basic and acidic residues" evidence="2">
    <location>
        <begin position="533"/>
        <end position="544"/>
    </location>
</feature>
<feature type="compositionally biased region" description="Acidic residues" evidence="2">
    <location>
        <begin position="551"/>
        <end position="562"/>
    </location>
</feature>
<feature type="compositionally biased region" description="Low complexity" evidence="2">
    <location>
        <begin position="656"/>
        <end position="668"/>
    </location>
</feature>